<accession>B3EHV1</accession>
<feature type="chain" id="PRO_1000092265" description="Phosphoheptose isomerase">
    <location>
        <begin position="1"/>
        <end position="214"/>
    </location>
</feature>
<feature type="domain" description="SIS" evidence="1">
    <location>
        <begin position="51"/>
        <end position="209"/>
    </location>
</feature>
<feature type="binding site" evidence="1">
    <location>
        <begin position="66"/>
        <end position="68"/>
    </location>
    <ligand>
        <name>substrate</name>
    </ligand>
</feature>
<feature type="binding site" evidence="1">
    <location>
        <position position="75"/>
    </location>
    <ligand>
        <name>Zn(2+)</name>
        <dbReference type="ChEBI" id="CHEBI:29105"/>
    </ligand>
</feature>
<feature type="binding site" evidence="1">
    <location>
        <position position="79"/>
    </location>
    <ligand>
        <name>substrate</name>
    </ligand>
</feature>
<feature type="binding site" evidence="1">
    <location>
        <position position="79"/>
    </location>
    <ligand>
        <name>Zn(2+)</name>
        <dbReference type="ChEBI" id="CHEBI:29105"/>
    </ligand>
</feature>
<feature type="binding site" evidence="1">
    <location>
        <begin position="110"/>
        <end position="111"/>
    </location>
    <ligand>
        <name>substrate</name>
    </ligand>
</feature>
<feature type="binding site" evidence="1">
    <location>
        <begin position="136"/>
        <end position="138"/>
    </location>
    <ligand>
        <name>substrate</name>
    </ligand>
</feature>
<feature type="binding site" evidence="1">
    <location>
        <position position="141"/>
    </location>
    <ligand>
        <name>substrate</name>
    </ligand>
</feature>
<feature type="binding site" evidence="1">
    <location>
        <position position="189"/>
    </location>
    <ligand>
        <name>substrate</name>
    </ligand>
</feature>
<feature type="binding site" evidence="1">
    <location>
        <position position="189"/>
    </location>
    <ligand>
        <name>Zn(2+)</name>
        <dbReference type="ChEBI" id="CHEBI:29105"/>
    </ligand>
</feature>
<feature type="binding site" evidence="1">
    <location>
        <position position="197"/>
    </location>
    <ligand>
        <name>Zn(2+)</name>
        <dbReference type="ChEBI" id="CHEBI:29105"/>
    </ligand>
</feature>
<dbReference type="EC" id="5.3.1.28" evidence="1"/>
<dbReference type="EMBL" id="CP001097">
    <property type="protein sequence ID" value="ACD91360.1"/>
    <property type="molecule type" value="Genomic_DNA"/>
</dbReference>
<dbReference type="RefSeq" id="WP_012467225.1">
    <property type="nucleotide sequence ID" value="NC_010803.1"/>
</dbReference>
<dbReference type="SMR" id="B3EHV1"/>
<dbReference type="STRING" id="290315.Clim_2337"/>
<dbReference type="KEGG" id="cli:Clim_2337"/>
<dbReference type="eggNOG" id="COG0279">
    <property type="taxonomic scope" value="Bacteria"/>
</dbReference>
<dbReference type="HOGENOM" id="CLU_080999_4_0_10"/>
<dbReference type="OrthoDB" id="9781311at2"/>
<dbReference type="UniPathway" id="UPA00041">
    <property type="reaction ID" value="UER00436"/>
</dbReference>
<dbReference type="Proteomes" id="UP000008841">
    <property type="component" value="Chromosome"/>
</dbReference>
<dbReference type="GO" id="GO:0005737">
    <property type="term" value="C:cytoplasm"/>
    <property type="evidence" value="ECO:0007669"/>
    <property type="project" value="UniProtKB-SubCell"/>
</dbReference>
<dbReference type="GO" id="GO:0097367">
    <property type="term" value="F:carbohydrate derivative binding"/>
    <property type="evidence" value="ECO:0007669"/>
    <property type="project" value="InterPro"/>
</dbReference>
<dbReference type="GO" id="GO:0008968">
    <property type="term" value="F:D-sedoheptulose 7-phosphate isomerase activity"/>
    <property type="evidence" value="ECO:0007669"/>
    <property type="project" value="UniProtKB-UniRule"/>
</dbReference>
<dbReference type="GO" id="GO:0008270">
    <property type="term" value="F:zinc ion binding"/>
    <property type="evidence" value="ECO:0007669"/>
    <property type="project" value="UniProtKB-UniRule"/>
</dbReference>
<dbReference type="GO" id="GO:0005975">
    <property type="term" value="P:carbohydrate metabolic process"/>
    <property type="evidence" value="ECO:0007669"/>
    <property type="project" value="UniProtKB-UniRule"/>
</dbReference>
<dbReference type="GO" id="GO:2001061">
    <property type="term" value="P:D-glycero-D-manno-heptose 7-phosphate biosynthetic process"/>
    <property type="evidence" value="ECO:0007669"/>
    <property type="project" value="UniProtKB-UniPathway"/>
</dbReference>
<dbReference type="CDD" id="cd05006">
    <property type="entry name" value="SIS_GmhA"/>
    <property type="match status" value="1"/>
</dbReference>
<dbReference type="Gene3D" id="3.40.50.10490">
    <property type="entry name" value="Glucose-6-phosphate isomerase like protein, domain 1"/>
    <property type="match status" value="1"/>
</dbReference>
<dbReference type="HAMAP" id="MF_00067">
    <property type="entry name" value="GmhA"/>
    <property type="match status" value="1"/>
</dbReference>
<dbReference type="InterPro" id="IPR035461">
    <property type="entry name" value="GmhA/DiaA"/>
</dbReference>
<dbReference type="InterPro" id="IPR004515">
    <property type="entry name" value="Phosphoheptose_Isoase"/>
</dbReference>
<dbReference type="InterPro" id="IPR001347">
    <property type="entry name" value="SIS_dom"/>
</dbReference>
<dbReference type="InterPro" id="IPR046348">
    <property type="entry name" value="SIS_dom_sf"/>
</dbReference>
<dbReference type="InterPro" id="IPR050099">
    <property type="entry name" value="SIS_GmhA/DiaA_subfam"/>
</dbReference>
<dbReference type="PANTHER" id="PTHR30390">
    <property type="entry name" value="SEDOHEPTULOSE 7-PHOSPHATE ISOMERASE / DNAA INITIATOR-ASSOCIATING FACTOR FOR REPLICATION INITIATION"/>
    <property type="match status" value="1"/>
</dbReference>
<dbReference type="Pfam" id="PF13580">
    <property type="entry name" value="SIS_2"/>
    <property type="match status" value="1"/>
</dbReference>
<dbReference type="SUPFAM" id="SSF53697">
    <property type="entry name" value="SIS domain"/>
    <property type="match status" value="1"/>
</dbReference>
<dbReference type="PROSITE" id="PS51464">
    <property type="entry name" value="SIS"/>
    <property type="match status" value="1"/>
</dbReference>
<sequence length="214" mass="22685">MIPKCRCSAGGLADRTPYEEVVLDTMLYSARLKENVARQNSAVIVAMARLIASTFEDGGKLLLCGNGGSAADAQHLATELTIRYRSSVERPALPAIALNADTTALTAGANDLGYDVVFRRLAEAYGREGDVVLGLSTSGNSRSVFNVLQYARGHGMKTIALTGGDGGIIKDLADLSIVVPHSGSADRVQECHITIGHVIIDLVERLLGYSPSRK</sequence>
<gene>
    <name evidence="1" type="primary">gmhA</name>
    <name type="ordered locus">Clim_2337</name>
</gene>
<name>GMHA_CHLL2</name>
<protein>
    <recommendedName>
        <fullName evidence="1">Phosphoheptose isomerase</fullName>
        <ecNumber evidence="1">5.3.1.28</ecNumber>
    </recommendedName>
    <alternativeName>
        <fullName evidence="1">Sedoheptulose 7-phosphate isomerase</fullName>
    </alternativeName>
</protein>
<organism>
    <name type="scientific">Chlorobium limicola (strain DSM 245 / NBRC 103803 / 6330)</name>
    <dbReference type="NCBI Taxonomy" id="290315"/>
    <lineage>
        <taxon>Bacteria</taxon>
        <taxon>Pseudomonadati</taxon>
        <taxon>Chlorobiota</taxon>
        <taxon>Chlorobiia</taxon>
        <taxon>Chlorobiales</taxon>
        <taxon>Chlorobiaceae</taxon>
        <taxon>Chlorobium/Pelodictyon group</taxon>
        <taxon>Chlorobium</taxon>
    </lineage>
</organism>
<comment type="function">
    <text evidence="1">Catalyzes the isomerization of sedoheptulose 7-phosphate in D-glycero-D-manno-heptose 7-phosphate.</text>
</comment>
<comment type="catalytic activity">
    <reaction evidence="1">
        <text>2 D-sedoheptulose 7-phosphate = D-glycero-alpha-D-manno-heptose 7-phosphate + D-glycero-beta-D-manno-heptose 7-phosphate</text>
        <dbReference type="Rhea" id="RHEA:27489"/>
        <dbReference type="ChEBI" id="CHEBI:57483"/>
        <dbReference type="ChEBI" id="CHEBI:60203"/>
        <dbReference type="ChEBI" id="CHEBI:60204"/>
        <dbReference type="EC" id="5.3.1.28"/>
    </reaction>
</comment>
<comment type="cofactor">
    <cofactor evidence="1">
        <name>Zn(2+)</name>
        <dbReference type="ChEBI" id="CHEBI:29105"/>
    </cofactor>
    <text evidence="1">Binds 1 zinc ion per subunit.</text>
</comment>
<comment type="pathway">
    <text evidence="1">Carbohydrate biosynthesis; D-glycero-D-manno-heptose 7-phosphate biosynthesis; D-glycero-alpha-D-manno-heptose 7-phosphate and D-glycero-beta-D-manno-heptose 7-phosphate from sedoheptulose 7-phosphate: step 1/1.</text>
</comment>
<comment type="subcellular location">
    <subcellularLocation>
        <location evidence="1">Cytoplasm</location>
    </subcellularLocation>
</comment>
<comment type="miscellaneous">
    <text evidence="1">The reaction produces a racemic mixture of D-glycero-alpha-D-manno-heptose 7-phosphate and D-glycero-beta-D-manno-heptose 7-phosphate.</text>
</comment>
<comment type="similarity">
    <text evidence="1">Belongs to the SIS family. GmhA subfamily.</text>
</comment>
<reference key="1">
    <citation type="submission" date="2008-05" db="EMBL/GenBank/DDBJ databases">
        <title>Complete sequence of Chlorobium limicola DSM 245.</title>
        <authorList>
            <consortium name="US DOE Joint Genome Institute"/>
            <person name="Lucas S."/>
            <person name="Copeland A."/>
            <person name="Lapidus A."/>
            <person name="Glavina del Rio T."/>
            <person name="Dalin E."/>
            <person name="Tice H."/>
            <person name="Bruce D."/>
            <person name="Goodwin L."/>
            <person name="Pitluck S."/>
            <person name="Schmutz J."/>
            <person name="Larimer F."/>
            <person name="Land M."/>
            <person name="Hauser L."/>
            <person name="Kyrpides N."/>
            <person name="Ovchinnikova G."/>
            <person name="Zhao F."/>
            <person name="Li T."/>
            <person name="Liu Z."/>
            <person name="Overmann J."/>
            <person name="Bryant D.A."/>
            <person name="Richardson P."/>
        </authorList>
    </citation>
    <scope>NUCLEOTIDE SEQUENCE [LARGE SCALE GENOMIC DNA]</scope>
    <source>
        <strain>DSM 245 / NBRC 103803 / 6330</strain>
    </source>
</reference>
<proteinExistence type="inferred from homology"/>
<evidence type="ECO:0000255" key="1">
    <source>
        <dbReference type="HAMAP-Rule" id="MF_00067"/>
    </source>
</evidence>
<keyword id="KW-0119">Carbohydrate metabolism</keyword>
<keyword id="KW-0963">Cytoplasm</keyword>
<keyword id="KW-0413">Isomerase</keyword>
<keyword id="KW-0479">Metal-binding</keyword>
<keyword id="KW-0862">Zinc</keyword>